<evidence type="ECO:0000255" key="1">
    <source>
        <dbReference type="HAMAP-Rule" id="MF_01363"/>
    </source>
</evidence>
<evidence type="ECO:0000305" key="2"/>
<proteinExistence type="inferred from homology"/>
<keyword id="KW-0687">Ribonucleoprotein</keyword>
<keyword id="KW-0689">Ribosomal protein</keyword>
<keyword id="KW-0694">RNA-binding</keyword>
<keyword id="KW-0699">rRNA-binding</keyword>
<dbReference type="EMBL" id="CU928164">
    <property type="protein sequence ID" value="CAR19797.1"/>
    <property type="molecule type" value="Genomic_DNA"/>
</dbReference>
<dbReference type="RefSeq" id="WP_000271401.1">
    <property type="nucleotide sequence ID" value="NC_011750.1"/>
</dbReference>
<dbReference type="RefSeq" id="YP_002409584.1">
    <property type="nucleotide sequence ID" value="NC_011750.1"/>
</dbReference>
<dbReference type="SMR" id="B7NKQ3"/>
<dbReference type="STRING" id="585057.ECIAI39_3681"/>
<dbReference type="GeneID" id="93778795"/>
<dbReference type="KEGG" id="ect:ECIAI39_3681"/>
<dbReference type="PATRIC" id="fig|585057.6.peg.3814"/>
<dbReference type="HOGENOM" id="CLU_061463_3_3_6"/>
<dbReference type="Proteomes" id="UP000000749">
    <property type="component" value="Chromosome"/>
</dbReference>
<dbReference type="GO" id="GO:0005737">
    <property type="term" value="C:cytoplasm"/>
    <property type="evidence" value="ECO:0007669"/>
    <property type="project" value="UniProtKB-ARBA"/>
</dbReference>
<dbReference type="GO" id="GO:1990904">
    <property type="term" value="C:ribonucleoprotein complex"/>
    <property type="evidence" value="ECO:0007669"/>
    <property type="project" value="UniProtKB-KW"/>
</dbReference>
<dbReference type="GO" id="GO:0005840">
    <property type="term" value="C:ribosome"/>
    <property type="evidence" value="ECO:0007669"/>
    <property type="project" value="UniProtKB-KW"/>
</dbReference>
<dbReference type="GO" id="GO:0019843">
    <property type="term" value="F:rRNA binding"/>
    <property type="evidence" value="ECO:0007669"/>
    <property type="project" value="UniProtKB-UniRule"/>
</dbReference>
<dbReference type="GO" id="GO:0003735">
    <property type="term" value="F:structural constituent of ribosome"/>
    <property type="evidence" value="ECO:0007669"/>
    <property type="project" value="InterPro"/>
</dbReference>
<dbReference type="GO" id="GO:0006412">
    <property type="term" value="P:translation"/>
    <property type="evidence" value="ECO:0007669"/>
    <property type="project" value="UniProtKB-UniRule"/>
</dbReference>
<dbReference type="HAMAP" id="MF_01363">
    <property type="entry name" value="Ribosomal_bL21"/>
    <property type="match status" value="1"/>
</dbReference>
<dbReference type="InterPro" id="IPR028909">
    <property type="entry name" value="bL21-like"/>
</dbReference>
<dbReference type="InterPro" id="IPR036164">
    <property type="entry name" value="bL21-like_sf"/>
</dbReference>
<dbReference type="InterPro" id="IPR001787">
    <property type="entry name" value="Ribosomal_bL21"/>
</dbReference>
<dbReference type="InterPro" id="IPR018258">
    <property type="entry name" value="Ribosomal_bL21_CS"/>
</dbReference>
<dbReference type="NCBIfam" id="TIGR00061">
    <property type="entry name" value="L21"/>
    <property type="match status" value="1"/>
</dbReference>
<dbReference type="PANTHER" id="PTHR21349">
    <property type="entry name" value="50S RIBOSOMAL PROTEIN L21"/>
    <property type="match status" value="1"/>
</dbReference>
<dbReference type="PANTHER" id="PTHR21349:SF0">
    <property type="entry name" value="LARGE RIBOSOMAL SUBUNIT PROTEIN BL21M"/>
    <property type="match status" value="1"/>
</dbReference>
<dbReference type="Pfam" id="PF00829">
    <property type="entry name" value="Ribosomal_L21p"/>
    <property type="match status" value="1"/>
</dbReference>
<dbReference type="SUPFAM" id="SSF141091">
    <property type="entry name" value="L21p-like"/>
    <property type="match status" value="1"/>
</dbReference>
<dbReference type="PROSITE" id="PS01169">
    <property type="entry name" value="RIBOSOMAL_L21"/>
    <property type="match status" value="1"/>
</dbReference>
<gene>
    <name evidence="1" type="primary">rplU</name>
    <name type="ordered locus">ECIAI39_3681</name>
</gene>
<protein>
    <recommendedName>
        <fullName evidence="1">Large ribosomal subunit protein bL21</fullName>
    </recommendedName>
    <alternativeName>
        <fullName evidence="2">50S ribosomal protein L21</fullName>
    </alternativeName>
</protein>
<accession>B7NKQ3</accession>
<feature type="chain" id="PRO_1000143790" description="Large ribosomal subunit protein bL21">
    <location>
        <begin position="1"/>
        <end position="103"/>
    </location>
</feature>
<reference key="1">
    <citation type="journal article" date="2009" name="PLoS Genet.">
        <title>Organised genome dynamics in the Escherichia coli species results in highly diverse adaptive paths.</title>
        <authorList>
            <person name="Touchon M."/>
            <person name="Hoede C."/>
            <person name="Tenaillon O."/>
            <person name="Barbe V."/>
            <person name="Baeriswyl S."/>
            <person name="Bidet P."/>
            <person name="Bingen E."/>
            <person name="Bonacorsi S."/>
            <person name="Bouchier C."/>
            <person name="Bouvet O."/>
            <person name="Calteau A."/>
            <person name="Chiapello H."/>
            <person name="Clermont O."/>
            <person name="Cruveiller S."/>
            <person name="Danchin A."/>
            <person name="Diard M."/>
            <person name="Dossat C."/>
            <person name="Karoui M.E."/>
            <person name="Frapy E."/>
            <person name="Garry L."/>
            <person name="Ghigo J.M."/>
            <person name="Gilles A.M."/>
            <person name="Johnson J."/>
            <person name="Le Bouguenec C."/>
            <person name="Lescat M."/>
            <person name="Mangenot S."/>
            <person name="Martinez-Jehanne V."/>
            <person name="Matic I."/>
            <person name="Nassif X."/>
            <person name="Oztas S."/>
            <person name="Petit M.A."/>
            <person name="Pichon C."/>
            <person name="Rouy Z."/>
            <person name="Ruf C.S."/>
            <person name="Schneider D."/>
            <person name="Tourret J."/>
            <person name="Vacherie B."/>
            <person name="Vallenet D."/>
            <person name="Medigue C."/>
            <person name="Rocha E.P.C."/>
            <person name="Denamur E."/>
        </authorList>
    </citation>
    <scope>NUCLEOTIDE SEQUENCE [LARGE SCALE GENOMIC DNA]</scope>
    <source>
        <strain>IAI39 / ExPEC</strain>
    </source>
</reference>
<sequence length="103" mass="11564">MYAVFQSGGKQHRVSEGQTVRLEKLDIATGETVEFAEVLMIANGEEVKIGVPFVDGGVIKAEVVAHGRGEKVKIVKFRRRKHYRKQQGHRQWFTDVKITGISA</sequence>
<name>RL21_ECO7I</name>
<comment type="function">
    <text evidence="1">This protein binds to 23S rRNA in the presence of protein L20.</text>
</comment>
<comment type="subunit">
    <text evidence="1">Part of the 50S ribosomal subunit. Contacts protein L20.</text>
</comment>
<comment type="similarity">
    <text evidence="1">Belongs to the bacterial ribosomal protein bL21 family.</text>
</comment>
<organism>
    <name type="scientific">Escherichia coli O7:K1 (strain IAI39 / ExPEC)</name>
    <dbReference type="NCBI Taxonomy" id="585057"/>
    <lineage>
        <taxon>Bacteria</taxon>
        <taxon>Pseudomonadati</taxon>
        <taxon>Pseudomonadota</taxon>
        <taxon>Gammaproteobacteria</taxon>
        <taxon>Enterobacterales</taxon>
        <taxon>Enterobacteriaceae</taxon>
        <taxon>Escherichia</taxon>
    </lineage>
</organism>